<feature type="chain" id="PRO_0000150645" description="Olfactory receptor 7A17">
    <location>
        <begin position="1"/>
        <end position="309"/>
    </location>
</feature>
<feature type="topological domain" description="Extracellular" evidence="1">
    <location>
        <begin position="1"/>
        <end position="25"/>
    </location>
</feature>
<feature type="transmembrane region" description="Helical; Name=1" evidence="1">
    <location>
        <begin position="26"/>
        <end position="46"/>
    </location>
</feature>
<feature type="topological domain" description="Cytoplasmic" evidence="1">
    <location>
        <begin position="47"/>
        <end position="54"/>
    </location>
</feature>
<feature type="transmembrane region" description="Helical; Name=2" evidence="1">
    <location>
        <begin position="55"/>
        <end position="75"/>
    </location>
</feature>
<feature type="topological domain" description="Extracellular" evidence="1">
    <location>
        <begin position="76"/>
        <end position="99"/>
    </location>
</feature>
<feature type="transmembrane region" description="Helical; Name=3" evidence="1">
    <location>
        <begin position="100"/>
        <end position="120"/>
    </location>
</feature>
<feature type="topological domain" description="Cytoplasmic" evidence="1">
    <location>
        <begin position="121"/>
        <end position="139"/>
    </location>
</feature>
<feature type="transmembrane region" description="Helical; Name=4" evidence="1">
    <location>
        <begin position="140"/>
        <end position="160"/>
    </location>
</feature>
<feature type="topological domain" description="Extracellular" evidence="1">
    <location>
        <begin position="161"/>
        <end position="197"/>
    </location>
</feature>
<feature type="transmembrane region" description="Helical; Name=5" evidence="1">
    <location>
        <begin position="198"/>
        <end position="217"/>
    </location>
</feature>
<feature type="topological domain" description="Cytoplasmic" evidence="1">
    <location>
        <begin position="218"/>
        <end position="237"/>
    </location>
</feature>
<feature type="transmembrane region" description="Helical; Name=6" evidence="1">
    <location>
        <begin position="238"/>
        <end position="258"/>
    </location>
</feature>
<feature type="topological domain" description="Extracellular" evidence="1">
    <location>
        <begin position="259"/>
        <end position="271"/>
    </location>
</feature>
<feature type="transmembrane region" description="Helical; Name=7" evidence="1">
    <location>
        <begin position="272"/>
        <end position="292"/>
    </location>
</feature>
<feature type="topological domain" description="Cytoplasmic" evidence="1">
    <location>
        <begin position="293"/>
        <end position="309"/>
    </location>
</feature>
<feature type="glycosylation site" description="N-linked (GlcNAc...) asparagine" evidence="1">
    <location>
        <position position="5"/>
    </location>
</feature>
<feature type="disulfide bond" evidence="2">
    <location>
        <begin position="97"/>
        <end position="189"/>
    </location>
</feature>
<feature type="sequence variant" id="VAR_053228" description="In dbSNP:rs10405148.">
    <original>V</original>
    <variation>A</variation>
    <location>
        <position position="37"/>
    </location>
</feature>
<feature type="sequence variant" id="VAR_053229" description="In dbSNP:rs10405129.">
    <original>I</original>
    <variation>T</variation>
    <location>
        <position position="46"/>
    </location>
</feature>
<feature type="sequence variant" id="VAR_053230" description="In dbSNP:rs10404119.">
    <original>A</original>
    <variation>S</variation>
    <location>
        <position position="69"/>
    </location>
</feature>
<feature type="sequence variant" id="VAR_053231" description="In dbSNP:rs13345394.">
    <original>A</original>
    <variation>T</variation>
    <location>
        <position position="237"/>
    </location>
</feature>
<accession>O14581</accession>
<accession>Q6IFQ6</accession>
<accession>Q96R98</accession>
<organism>
    <name type="scientific">Homo sapiens</name>
    <name type="common">Human</name>
    <dbReference type="NCBI Taxonomy" id="9606"/>
    <lineage>
        <taxon>Eukaryota</taxon>
        <taxon>Metazoa</taxon>
        <taxon>Chordata</taxon>
        <taxon>Craniata</taxon>
        <taxon>Vertebrata</taxon>
        <taxon>Euteleostomi</taxon>
        <taxon>Mammalia</taxon>
        <taxon>Eutheria</taxon>
        <taxon>Euarchontoglires</taxon>
        <taxon>Primates</taxon>
        <taxon>Haplorrhini</taxon>
        <taxon>Catarrhini</taxon>
        <taxon>Hominidae</taxon>
        <taxon>Homo</taxon>
    </lineage>
</organism>
<proteinExistence type="evidence at protein level"/>
<dbReference type="EMBL" id="AC002988">
    <property type="protein sequence ID" value="AAB82060.1"/>
    <property type="molecule type" value="Genomic_DNA"/>
</dbReference>
<dbReference type="EMBL" id="BC101587">
    <property type="protein sequence ID" value="AAI01588.1"/>
    <property type="molecule type" value="mRNA"/>
</dbReference>
<dbReference type="EMBL" id="BC117357">
    <property type="protein sequence ID" value="AAI17358.1"/>
    <property type="molecule type" value="mRNA"/>
</dbReference>
<dbReference type="EMBL" id="AF399541">
    <property type="protein sequence ID" value="AAK95026.1"/>
    <property type="molecule type" value="Genomic_DNA"/>
</dbReference>
<dbReference type="EMBL" id="BK004206">
    <property type="protein sequence ID" value="DAA04604.1"/>
    <property type="molecule type" value="Genomic_DNA"/>
</dbReference>
<dbReference type="CCDS" id="CCDS12319.1"/>
<dbReference type="RefSeq" id="NP_112163.1">
    <property type="nucleotide sequence ID" value="NM_030901.2"/>
</dbReference>
<dbReference type="SMR" id="O14581"/>
<dbReference type="BioGRID" id="117682">
    <property type="interactions" value="5"/>
</dbReference>
<dbReference type="FunCoup" id="O14581">
    <property type="interactions" value="481"/>
</dbReference>
<dbReference type="IntAct" id="O14581">
    <property type="interactions" value="4"/>
</dbReference>
<dbReference type="STRING" id="9606.ENSP00000493283"/>
<dbReference type="GlyCosmos" id="O14581">
    <property type="glycosylation" value="1 site, No reported glycans"/>
</dbReference>
<dbReference type="GlyGen" id="O14581">
    <property type="glycosylation" value="1 site"/>
</dbReference>
<dbReference type="iPTMnet" id="O14581"/>
<dbReference type="PhosphoSitePlus" id="O14581"/>
<dbReference type="BioMuta" id="OR7A17"/>
<dbReference type="MassIVE" id="O14581"/>
<dbReference type="PaxDb" id="9606-ENSP00000328144"/>
<dbReference type="Antibodypedia" id="71928">
    <property type="antibodies" value="17 antibodies from 10 providers"/>
</dbReference>
<dbReference type="DNASU" id="26333"/>
<dbReference type="Ensembl" id="ENST00000641113.1">
    <property type="protein sequence ID" value="ENSP00000493283.1"/>
    <property type="gene ID" value="ENSG00000185385.5"/>
</dbReference>
<dbReference type="Ensembl" id="ENST00000642123.1">
    <property type="protein sequence ID" value="ENSP00000493071.1"/>
    <property type="gene ID" value="ENSG00000185385.5"/>
</dbReference>
<dbReference type="GeneID" id="26333"/>
<dbReference type="KEGG" id="hsa:26333"/>
<dbReference type="MANE-Select" id="ENST00000641113.1">
    <property type="protein sequence ID" value="ENSP00000493283.1"/>
    <property type="RefSeq nucleotide sequence ID" value="NM_030901.2"/>
    <property type="RefSeq protein sequence ID" value="NP_112163.1"/>
</dbReference>
<dbReference type="UCSC" id="uc010xob.3">
    <property type="organism name" value="human"/>
</dbReference>
<dbReference type="AGR" id="HGNC:8363"/>
<dbReference type="CTD" id="26333"/>
<dbReference type="GeneCards" id="OR7A17"/>
<dbReference type="HGNC" id="HGNC:8363">
    <property type="gene designation" value="OR7A17"/>
</dbReference>
<dbReference type="HPA" id="ENSG00000185385">
    <property type="expression patterns" value="Not detected"/>
</dbReference>
<dbReference type="neXtProt" id="NX_O14581"/>
<dbReference type="OpenTargets" id="ENSG00000185385"/>
<dbReference type="PharmGKB" id="PA32616"/>
<dbReference type="VEuPathDB" id="HostDB:ENSG00000185385"/>
<dbReference type="eggNOG" id="ENOG502RTYS">
    <property type="taxonomic scope" value="Eukaryota"/>
</dbReference>
<dbReference type="GeneTree" id="ENSGT00940000153523"/>
<dbReference type="HOGENOM" id="CLU_012526_1_0_1"/>
<dbReference type="InParanoid" id="O14581"/>
<dbReference type="OMA" id="MAPENHT"/>
<dbReference type="OrthoDB" id="9444602at2759"/>
<dbReference type="PAN-GO" id="O14581">
    <property type="GO annotations" value="3 GO annotations based on evolutionary models"/>
</dbReference>
<dbReference type="PhylomeDB" id="O14581"/>
<dbReference type="TreeFam" id="TF337210"/>
<dbReference type="PathwayCommons" id="O14581"/>
<dbReference type="Reactome" id="R-HSA-9752946">
    <property type="pathway name" value="Expression and translocation of olfactory receptors"/>
</dbReference>
<dbReference type="SignaLink" id="O14581"/>
<dbReference type="BioGRID-ORCS" id="26333">
    <property type="hits" value="229 hits in 695 CRISPR screens"/>
</dbReference>
<dbReference type="GeneWiki" id="OR7A17"/>
<dbReference type="GenomeRNAi" id="26333"/>
<dbReference type="Pharos" id="O14581">
    <property type="development level" value="Tdark"/>
</dbReference>
<dbReference type="PRO" id="PR:O14581"/>
<dbReference type="Proteomes" id="UP000005640">
    <property type="component" value="Chromosome 19"/>
</dbReference>
<dbReference type="RNAct" id="O14581">
    <property type="molecule type" value="protein"/>
</dbReference>
<dbReference type="Bgee" id="ENSG00000185385">
    <property type="expression patterns" value="Expressed in sural nerve"/>
</dbReference>
<dbReference type="ExpressionAtlas" id="O14581">
    <property type="expression patterns" value="baseline and differential"/>
</dbReference>
<dbReference type="GO" id="GO:0005886">
    <property type="term" value="C:plasma membrane"/>
    <property type="evidence" value="ECO:0000318"/>
    <property type="project" value="GO_Central"/>
</dbReference>
<dbReference type="GO" id="GO:0004930">
    <property type="term" value="F:G protein-coupled receptor activity"/>
    <property type="evidence" value="ECO:0007669"/>
    <property type="project" value="UniProtKB-KW"/>
</dbReference>
<dbReference type="GO" id="GO:0004984">
    <property type="term" value="F:olfactory receptor activity"/>
    <property type="evidence" value="ECO:0000318"/>
    <property type="project" value="GO_Central"/>
</dbReference>
<dbReference type="GO" id="GO:0007165">
    <property type="term" value="P:signal transduction"/>
    <property type="evidence" value="ECO:0000318"/>
    <property type="project" value="GO_Central"/>
</dbReference>
<dbReference type="CDD" id="cd15234">
    <property type="entry name" value="7tmA_OR7-like"/>
    <property type="match status" value="1"/>
</dbReference>
<dbReference type="FunFam" id="1.20.1070.10:FF:000009">
    <property type="entry name" value="Olfactory receptor"/>
    <property type="match status" value="1"/>
</dbReference>
<dbReference type="Gene3D" id="1.20.1070.10">
    <property type="entry name" value="Rhodopsin 7-helix transmembrane proteins"/>
    <property type="match status" value="1"/>
</dbReference>
<dbReference type="InterPro" id="IPR000276">
    <property type="entry name" value="GPCR_Rhodpsn"/>
</dbReference>
<dbReference type="InterPro" id="IPR017452">
    <property type="entry name" value="GPCR_Rhodpsn_7TM"/>
</dbReference>
<dbReference type="InterPro" id="IPR000725">
    <property type="entry name" value="Olfact_rcpt"/>
</dbReference>
<dbReference type="PANTHER" id="PTHR48001">
    <property type="entry name" value="OLFACTORY RECEPTOR"/>
    <property type="match status" value="1"/>
</dbReference>
<dbReference type="Pfam" id="PF13853">
    <property type="entry name" value="7tm_4"/>
    <property type="match status" value="1"/>
</dbReference>
<dbReference type="PRINTS" id="PR00237">
    <property type="entry name" value="GPCRRHODOPSN"/>
</dbReference>
<dbReference type="PRINTS" id="PR00245">
    <property type="entry name" value="OLFACTORYR"/>
</dbReference>
<dbReference type="SUPFAM" id="SSF81321">
    <property type="entry name" value="Family A G protein-coupled receptor-like"/>
    <property type="match status" value="1"/>
</dbReference>
<dbReference type="PROSITE" id="PS00237">
    <property type="entry name" value="G_PROTEIN_RECEP_F1_1"/>
    <property type="match status" value="1"/>
</dbReference>
<dbReference type="PROSITE" id="PS50262">
    <property type="entry name" value="G_PROTEIN_RECEP_F1_2"/>
    <property type="match status" value="1"/>
</dbReference>
<evidence type="ECO:0000255" key="1"/>
<evidence type="ECO:0000255" key="2">
    <source>
        <dbReference type="PROSITE-ProRule" id="PRU00521"/>
    </source>
</evidence>
<evidence type="ECO:0000305" key="3"/>
<name>OR7AH_HUMAN</name>
<comment type="function">
    <text evidence="3">Odorant receptor.</text>
</comment>
<comment type="interaction">
    <interactant intactId="EBI-13329281">
        <id>O14581</id>
    </interactant>
    <interactant intactId="EBI-3867333">
        <id>A8MQ03</id>
        <label>CYSRT1</label>
    </interactant>
    <organismsDiffer>false</organismsDiffer>
    <experiments>3</experiments>
</comment>
<comment type="interaction">
    <interactant intactId="EBI-13329281">
        <id>O14581</id>
    </interactant>
    <interactant intactId="EBI-1052037">
        <id>Q8IUC1</id>
        <label>KRTAP11-1</label>
    </interactant>
    <organismsDiffer>false</organismsDiffer>
    <experiments>3</experiments>
</comment>
<comment type="subcellular location">
    <subcellularLocation>
        <location>Cell membrane</location>
        <topology>Multi-pass membrane protein</topology>
    </subcellularLocation>
</comment>
<comment type="similarity">
    <text evidence="2">Belongs to the G-protein coupled receptor 1 family.</text>
</comment>
<comment type="online information" name="Human Olfactory Receptor Data Exploratorium (HORDE)">
    <link uri="http://genome.weizmann.ac.il/horde/card/index/symbol:OR7A17"/>
</comment>
<reference key="1">
    <citation type="journal article" date="2004" name="Nature">
        <title>The DNA sequence and biology of human chromosome 19.</title>
        <authorList>
            <person name="Grimwood J."/>
            <person name="Gordon L.A."/>
            <person name="Olsen A.S."/>
            <person name="Terry A."/>
            <person name="Schmutz J."/>
            <person name="Lamerdin J.E."/>
            <person name="Hellsten U."/>
            <person name="Goodstein D."/>
            <person name="Couronne O."/>
            <person name="Tran-Gyamfi M."/>
            <person name="Aerts A."/>
            <person name="Altherr M."/>
            <person name="Ashworth L."/>
            <person name="Bajorek E."/>
            <person name="Black S."/>
            <person name="Branscomb E."/>
            <person name="Caenepeel S."/>
            <person name="Carrano A.V."/>
            <person name="Caoile C."/>
            <person name="Chan Y.M."/>
            <person name="Christensen M."/>
            <person name="Cleland C.A."/>
            <person name="Copeland A."/>
            <person name="Dalin E."/>
            <person name="Dehal P."/>
            <person name="Denys M."/>
            <person name="Detter J.C."/>
            <person name="Escobar J."/>
            <person name="Flowers D."/>
            <person name="Fotopulos D."/>
            <person name="Garcia C."/>
            <person name="Georgescu A.M."/>
            <person name="Glavina T."/>
            <person name="Gomez M."/>
            <person name="Gonzales E."/>
            <person name="Groza M."/>
            <person name="Hammon N."/>
            <person name="Hawkins T."/>
            <person name="Haydu L."/>
            <person name="Ho I."/>
            <person name="Huang W."/>
            <person name="Israni S."/>
            <person name="Jett J."/>
            <person name="Kadner K."/>
            <person name="Kimball H."/>
            <person name="Kobayashi A."/>
            <person name="Larionov V."/>
            <person name="Leem S.-H."/>
            <person name="Lopez F."/>
            <person name="Lou Y."/>
            <person name="Lowry S."/>
            <person name="Malfatti S."/>
            <person name="Martinez D."/>
            <person name="McCready P.M."/>
            <person name="Medina C."/>
            <person name="Morgan J."/>
            <person name="Nelson K."/>
            <person name="Nolan M."/>
            <person name="Ovcharenko I."/>
            <person name="Pitluck S."/>
            <person name="Pollard M."/>
            <person name="Popkie A.P."/>
            <person name="Predki P."/>
            <person name="Quan G."/>
            <person name="Ramirez L."/>
            <person name="Rash S."/>
            <person name="Retterer J."/>
            <person name="Rodriguez A."/>
            <person name="Rogers S."/>
            <person name="Salamov A."/>
            <person name="Salazar A."/>
            <person name="She X."/>
            <person name="Smith D."/>
            <person name="Slezak T."/>
            <person name="Solovyev V."/>
            <person name="Thayer N."/>
            <person name="Tice H."/>
            <person name="Tsai M."/>
            <person name="Ustaszewska A."/>
            <person name="Vo N."/>
            <person name="Wagner M."/>
            <person name="Wheeler J."/>
            <person name="Wu K."/>
            <person name="Xie G."/>
            <person name="Yang J."/>
            <person name="Dubchak I."/>
            <person name="Furey T.S."/>
            <person name="DeJong P."/>
            <person name="Dickson M."/>
            <person name="Gordon D."/>
            <person name="Eichler E.E."/>
            <person name="Pennacchio L.A."/>
            <person name="Richardson P."/>
            <person name="Stubbs L."/>
            <person name="Rokhsar D.S."/>
            <person name="Myers R.M."/>
            <person name="Rubin E.M."/>
            <person name="Lucas S.M."/>
        </authorList>
    </citation>
    <scope>NUCLEOTIDE SEQUENCE [LARGE SCALE GENOMIC DNA]</scope>
</reference>
<reference key="2">
    <citation type="journal article" date="2004" name="Genome Res.">
        <title>The status, quality, and expansion of the NIH full-length cDNA project: the Mammalian Gene Collection (MGC).</title>
        <authorList>
            <consortium name="The MGC Project Team"/>
        </authorList>
    </citation>
    <scope>NUCLEOTIDE SEQUENCE [LARGE SCALE MRNA]</scope>
    <source>
        <tissue>Placenta</tissue>
    </source>
</reference>
<reference key="3">
    <citation type="journal article" date="2002" name="Genomics">
        <title>DEFOG: a practical scheme for deciphering families of genes.</title>
        <authorList>
            <person name="Fuchs T."/>
            <person name="Malecova B."/>
            <person name="Linhart C."/>
            <person name="Sharan R."/>
            <person name="Khen M."/>
            <person name="Herwig R."/>
            <person name="Shmulevich D."/>
            <person name="Elkon R."/>
            <person name="Steinfath M."/>
            <person name="O'Brien J.K."/>
            <person name="Radelof U."/>
            <person name="Lehrach H."/>
            <person name="Lancet D."/>
            <person name="Shamir R."/>
        </authorList>
    </citation>
    <scope>NUCLEOTIDE SEQUENCE [GENOMIC DNA] OF 68-283</scope>
</reference>
<reference key="4">
    <citation type="journal article" date="2004" name="Proc. Natl. Acad. Sci. U.S.A.">
        <title>The human olfactory receptor gene family.</title>
        <authorList>
            <person name="Malnic B."/>
            <person name="Godfrey P.A."/>
            <person name="Buck L.B."/>
        </authorList>
    </citation>
    <scope>IDENTIFICATION</scope>
</reference>
<reference key="5">
    <citation type="journal article" date="2004" name="Proc. Natl. Acad. Sci. U.S.A.">
        <authorList>
            <person name="Malnic B."/>
            <person name="Godfrey P.A."/>
            <person name="Buck L.B."/>
        </authorList>
    </citation>
    <scope>ERRATUM OF PUBMED:14983052</scope>
</reference>
<keyword id="KW-1003">Cell membrane</keyword>
<keyword id="KW-1015">Disulfide bond</keyword>
<keyword id="KW-0297">G-protein coupled receptor</keyword>
<keyword id="KW-0325">Glycoprotein</keyword>
<keyword id="KW-0472">Membrane</keyword>
<keyword id="KW-0552">Olfaction</keyword>
<keyword id="KW-0675">Receptor</keyword>
<keyword id="KW-1185">Reference proteome</keyword>
<keyword id="KW-0716">Sensory transduction</keyword>
<keyword id="KW-0807">Transducer</keyword>
<keyword id="KW-0812">Transmembrane</keyword>
<keyword id="KW-1133">Transmembrane helix</keyword>
<gene>
    <name type="primary">OR7A17</name>
</gene>
<sequence length="309" mass="34013">MEPENDTGISEFVLLGLSEEPELQPFLFGLFLSMYLVTVLGNLLIILATISDSHLHTPMYFFLSNLSFADICFISTTIPKMLINIQTQSRVITYAGCITQMCFFVLFGGLDSLLLAVMAYDRFVAICHPLHYTVIMNPRLCGLLVLASWMIAALNSLSQSLMVLWLSFCTDLEIPHFFCELNQVIHLACSDTFLNDMGMYFAAGLLAGGPLVGILCSYSKIVSSIRAISSAQGKYKAFSTCASHLSVVSLFCCTGLGVYLTSAATHNSHTSATASVMYTVATPMLNPFIYSLRNKDIKRALKMSFRGKQ</sequence>
<protein>
    <recommendedName>
        <fullName>Olfactory receptor 7A17</fullName>
    </recommendedName>
</protein>